<accession>Q6AIM2</accession>
<proteinExistence type="inferred from homology"/>
<feature type="chain" id="PRO_0000114020" description="Glutamyl-tRNA reductase">
    <location>
        <begin position="1"/>
        <end position="426"/>
    </location>
</feature>
<feature type="active site" description="Nucleophile" evidence="1">
    <location>
        <position position="52"/>
    </location>
</feature>
<feature type="binding site" evidence="1">
    <location>
        <begin position="51"/>
        <end position="54"/>
    </location>
    <ligand>
        <name>substrate</name>
    </ligand>
</feature>
<feature type="binding site" evidence="1">
    <location>
        <position position="110"/>
    </location>
    <ligand>
        <name>substrate</name>
    </ligand>
</feature>
<feature type="binding site" evidence="1">
    <location>
        <begin position="115"/>
        <end position="117"/>
    </location>
    <ligand>
        <name>substrate</name>
    </ligand>
</feature>
<feature type="binding site" evidence="1">
    <location>
        <position position="121"/>
    </location>
    <ligand>
        <name>substrate</name>
    </ligand>
</feature>
<feature type="binding site" evidence="1">
    <location>
        <begin position="190"/>
        <end position="195"/>
    </location>
    <ligand>
        <name>NADP(+)</name>
        <dbReference type="ChEBI" id="CHEBI:58349"/>
    </ligand>
</feature>
<feature type="site" description="Important for activity" evidence="1">
    <location>
        <position position="100"/>
    </location>
</feature>
<organism>
    <name type="scientific">Desulfotalea psychrophila (strain LSv54 / DSM 12343)</name>
    <dbReference type="NCBI Taxonomy" id="177439"/>
    <lineage>
        <taxon>Bacteria</taxon>
        <taxon>Pseudomonadati</taxon>
        <taxon>Thermodesulfobacteriota</taxon>
        <taxon>Desulfobulbia</taxon>
        <taxon>Desulfobulbales</taxon>
        <taxon>Desulfocapsaceae</taxon>
        <taxon>Desulfotalea</taxon>
    </lineage>
</organism>
<comment type="function">
    <text evidence="1">Catalyzes the NADPH-dependent reduction of glutamyl-tRNA(Glu) to glutamate 1-semialdehyde (GSA).</text>
</comment>
<comment type="catalytic activity">
    <reaction evidence="1">
        <text>(S)-4-amino-5-oxopentanoate + tRNA(Glu) + NADP(+) = L-glutamyl-tRNA(Glu) + NADPH + H(+)</text>
        <dbReference type="Rhea" id="RHEA:12344"/>
        <dbReference type="Rhea" id="RHEA-COMP:9663"/>
        <dbReference type="Rhea" id="RHEA-COMP:9680"/>
        <dbReference type="ChEBI" id="CHEBI:15378"/>
        <dbReference type="ChEBI" id="CHEBI:57501"/>
        <dbReference type="ChEBI" id="CHEBI:57783"/>
        <dbReference type="ChEBI" id="CHEBI:58349"/>
        <dbReference type="ChEBI" id="CHEBI:78442"/>
        <dbReference type="ChEBI" id="CHEBI:78520"/>
        <dbReference type="EC" id="1.2.1.70"/>
    </reaction>
</comment>
<comment type="pathway">
    <text evidence="1">Porphyrin-containing compound metabolism; protoporphyrin-IX biosynthesis; 5-aminolevulinate from L-glutamyl-tRNA(Glu): step 1/2.</text>
</comment>
<comment type="subunit">
    <text evidence="1">Homodimer.</text>
</comment>
<comment type="domain">
    <text evidence="1">Possesses an unusual extended V-shaped dimeric structure with each monomer consisting of three distinct domains arranged along a curved 'spinal' alpha-helix. The N-terminal catalytic domain specifically recognizes the glutamate moiety of the substrate. The second domain is the NADPH-binding domain, and the third C-terminal domain is responsible for dimerization.</text>
</comment>
<comment type="miscellaneous">
    <text evidence="1">During catalysis, the active site Cys acts as a nucleophile attacking the alpha-carbonyl group of tRNA-bound glutamate with the formation of a thioester intermediate between enzyme and glutamate, and the concomitant release of tRNA(Glu). The thioester intermediate is finally reduced by direct hydride transfer from NADPH, to form the product GSA.</text>
</comment>
<comment type="similarity">
    <text evidence="1">Belongs to the glutamyl-tRNA reductase family.</text>
</comment>
<dbReference type="EC" id="1.2.1.70" evidence="1"/>
<dbReference type="EMBL" id="CR522870">
    <property type="protein sequence ID" value="CAG37808.1"/>
    <property type="molecule type" value="Genomic_DNA"/>
</dbReference>
<dbReference type="RefSeq" id="WP_011190320.1">
    <property type="nucleotide sequence ID" value="NC_006138.1"/>
</dbReference>
<dbReference type="SMR" id="Q6AIM2"/>
<dbReference type="STRING" id="177439.DP3079"/>
<dbReference type="KEGG" id="dps:DP3079"/>
<dbReference type="eggNOG" id="COG0373">
    <property type="taxonomic scope" value="Bacteria"/>
</dbReference>
<dbReference type="HOGENOM" id="CLU_035113_2_2_7"/>
<dbReference type="OrthoDB" id="110209at2"/>
<dbReference type="UniPathway" id="UPA00251">
    <property type="reaction ID" value="UER00316"/>
</dbReference>
<dbReference type="Proteomes" id="UP000000602">
    <property type="component" value="Chromosome"/>
</dbReference>
<dbReference type="GO" id="GO:0008883">
    <property type="term" value="F:glutamyl-tRNA reductase activity"/>
    <property type="evidence" value="ECO:0007669"/>
    <property type="project" value="UniProtKB-UniRule"/>
</dbReference>
<dbReference type="GO" id="GO:0050661">
    <property type="term" value="F:NADP binding"/>
    <property type="evidence" value="ECO:0007669"/>
    <property type="project" value="InterPro"/>
</dbReference>
<dbReference type="GO" id="GO:0019353">
    <property type="term" value="P:protoporphyrinogen IX biosynthetic process from glutamate"/>
    <property type="evidence" value="ECO:0007669"/>
    <property type="project" value="TreeGrafter"/>
</dbReference>
<dbReference type="CDD" id="cd05213">
    <property type="entry name" value="NAD_bind_Glutamyl_tRNA_reduct"/>
    <property type="match status" value="1"/>
</dbReference>
<dbReference type="FunFam" id="3.30.460.30:FF:000001">
    <property type="entry name" value="Glutamyl-tRNA reductase"/>
    <property type="match status" value="1"/>
</dbReference>
<dbReference type="FunFam" id="3.40.50.720:FF:000031">
    <property type="entry name" value="Glutamyl-tRNA reductase"/>
    <property type="match status" value="1"/>
</dbReference>
<dbReference type="Gene3D" id="3.30.460.30">
    <property type="entry name" value="Glutamyl-tRNA reductase, N-terminal domain"/>
    <property type="match status" value="1"/>
</dbReference>
<dbReference type="Gene3D" id="3.40.50.720">
    <property type="entry name" value="NAD(P)-binding Rossmann-like Domain"/>
    <property type="match status" value="1"/>
</dbReference>
<dbReference type="HAMAP" id="MF_00087">
    <property type="entry name" value="Glu_tRNA_reductase"/>
    <property type="match status" value="1"/>
</dbReference>
<dbReference type="InterPro" id="IPR000343">
    <property type="entry name" value="4pyrrol_synth_GluRdtase"/>
</dbReference>
<dbReference type="InterPro" id="IPR015896">
    <property type="entry name" value="4pyrrol_synth_GluRdtase_dimer"/>
</dbReference>
<dbReference type="InterPro" id="IPR015895">
    <property type="entry name" value="4pyrrol_synth_GluRdtase_N"/>
</dbReference>
<dbReference type="InterPro" id="IPR018214">
    <property type="entry name" value="GluRdtase_CS"/>
</dbReference>
<dbReference type="InterPro" id="IPR036453">
    <property type="entry name" value="GluRdtase_dimer_dom_sf"/>
</dbReference>
<dbReference type="InterPro" id="IPR036343">
    <property type="entry name" value="GluRdtase_N_sf"/>
</dbReference>
<dbReference type="InterPro" id="IPR036291">
    <property type="entry name" value="NAD(P)-bd_dom_sf"/>
</dbReference>
<dbReference type="InterPro" id="IPR006151">
    <property type="entry name" value="Shikm_DH/Glu-tRNA_Rdtase"/>
</dbReference>
<dbReference type="NCBIfam" id="TIGR01035">
    <property type="entry name" value="hemA"/>
    <property type="match status" value="1"/>
</dbReference>
<dbReference type="PANTHER" id="PTHR43013">
    <property type="entry name" value="GLUTAMYL-TRNA REDUCTASE"/>
    <property type="match status" value="1"/>
</dbReference>
<dbReference type="PANTHER" id="PTHR43013:SF1">
    <property type="entry name" value="GLUTAMYL-TRNA REDUCTASE"/>
    <property type="match status" value="1"/>
</dbReference>
<dbReference type="Pfam" id="PF00745">
    <property type="entry name" value="GlutR_dimer"/>
    <property type="match status" value="1"/>
</dbReference>
<dbReference type="Pfam" id="PF05201">
    <property type="entry name" value="GlutR_N"/>
    <property type="match status" value="1"/>
</dbReference>
<dbReference type="Pfam" id="PF01488">
    <property type="entry name" value="Shikimate_DH"/>
    <property type="match status" value="1"/>
</dbReference>
<dbReference type="PIRSF" id="PIRSF000445">
    <property type="entry name" value="4pyrrol_synth_GluRdtase"/>
    <property type="match status" value="1"/>
</dbReference>
<dbReference type="SUPFAM" id="SSF69742">
    <property type="entry name" value="Glutamyl tRNA-reductase catalytic, N-terminal domain"/>
    <property type="match status" value="1"/>
</dbReference>
<dbReference type="SUPFAM" id="SSF69075">
    <property type="entry name" value="Glutamyl tRNA-reductase dimerization domain"/>
    <property type="match status" value="1"/>
</dbReference>
<dbReference type="SUPFAM" id="SSF51735">
    <property type="entry name" value="NAD(P)-binding Rossmann-fold domains"/>
    <property type="match status" value="1"/>
</dbReference>
<dbReference type="PROSITE" id="PS00747">
    <property type="entry name" value="GLUTR"/>
    <property type="match status" value="1"/>
</dbReference>
<sequence length="426" mass="47343">MFEKQVFLFGVNHKTTPVAVREKIAFTDGYETALTRLQEEVGCDESYLLSTCNRVEILVYADSTRDIEAEVSRFLFAGKVPEEDCRDYLYALKGLPAVQHLFTVAASLDSMVVGEAQILGQLKTAYRHASALGCTGPLLNRLLHKSFSVAKRVRTETAIGASAVSISYAAVQLARKIFGNLDTKKVMLVGAGEMAELAAEHLVGQGVSSVVVANRTLTRAVELADKFGGTAICMEELYAQLEDVDIIISSTGAQHIIIESAEVRPIMRVRRNRPLFFIDIAVPRDLDPELNELENVYLYDIDDLSNVVEVNKSGRDHEAIKAGCIVEEETRKFDEWYQGLAVKPTVLALREKMSGIIEQELRKTLPRLHDLGEHDQRSIEKMVASISSKFLHDPLHYLKSDSCHGRDKSQAKVDTLRSVFSLKGDI</sequence>
<name>HEM1_DESPS</name>
<keyword id="KW-0521">NADP</keyword>
<keyword id="KW-0560">Oxidoreductase</keyword>
<keyword id="KW-0627">Porphyrin biosynthesis</keyword>
<keyword id="KW-1185">Reference proteome</keyword>
<gene>
    <name evidence="1" type="primary">hemA</name>
    <name type="ordered locus">DP3079</name>
</gene>
<protein>
    <recommendedName>
        <fullName evidence="1">Glutamyl-tRNA reductase</fullName>
        <shortName evidence="1">GluTR</shortName>
        <ecNumber evidence="1">1.2.1.70</ecNumber>
    </recommendedName>
</protein>
<evidence type="ECO:0000255" key="1">
    <source>
        <dbReference type="HAMAP-Rule" id="MF_00087"/>
    </source>
</evidence>
<reference key="1">
    <citation type="journal article" date="2004" name="Environ. Microbiol.">
        <title>The genome of Desulfotalea psychrophila, a sulfate-reducing bacterium from permanently cold Arctic sediments.</title>
        <authorList>
            <person name="Rabus R."/>
            <person name="Ruepp A."/>
            <person name="Frickey T."/>
            <person name="Rattei T."/>
            <person name="Fartmann B."/>
            <person name="Stark M."/>
            <person name="Bauer M."/>
            <person name="Zibat A."/>
            <person name="Lombardot T."/>
            <person name="Becker I."/>
            <person name="Amann J."/>
            <person name="Gellner K."/>
            <person name="Teeling H."/>
            <person name="Leuschner W.D."/>
            <person name="Gloeckner F.-O."/>
            <person name="Lupas A.N."/>
            <person name="Amann R."/>
            <person name="Klenk H.-P."/>
        </authorList>
    </citation>
    <scope>NUCLEOTIDE SEQUENCE [LARGE SCALE GENOMIC DNA]</scope>
    <source>
        <strain>DSM 12343 / LSv54</strain>
    </source>
</reference>